<organism>
    <name type="scientific">Corynebacterium glutamicum (strain ATCC 13032 / DSM 20300 / JCM 1318 / BCRC 11384 / CCUG 27702 / LMG 3730 / NBRC 12168 / NCIMB 10025 / NRRL B-2784 / 534)</name>
    <dbReference type="NCBI Taxonomy" id="196627"/>
    <lineage>
        <taxon>Bacteria</taxon>
        <taxon>Bacillati</taxon>
        <taxon>Actinomycetota</taxon>
        <taxon>Actinomycetes</taxon>
        <taxon>Mycobacteriales</taxon>
        <taxon>Corynebacteriaceae</taxon>
        <taxon>Corynebacterium</taxon>
    </lineage>
</organism>
<comment type="function">
    <text evidence="1">Catalyzes the interconversion of beta-pyran and beta-furan forms of D-ribose.</text>
</comment>
<comment type="catalytic activity">
    <reaction evidence="1">
        <text>beta-D-ribopyranose = beta-D-ribofuranose</text>
        <dbReference type="Rhea" id="RHEA:25432"/>
        <dbReference type="ChEBI" id="CHEBI:27476"/>
        <dbReference type="ChEBI" id="CHEBI:47002"/>
        <dbReference type="EC" id="5.4.99.62"/>
    </reaction>
</comment>
<comment type="pathway">
    <text evidence="1">Carbohydrate metabolism; D-ribose degradation; D-ribose 5-phosphate from beta-D-ribopyranose: step 1/2.</text>
</comment>
<comment type="subunit">
    <text evidence="1">Homodecamer.</text>
</comment>
<comment type="subcellular location">
    <subcellularLocation>
        <location evidence="1">Cytoplasm</location>
    </subcellularLocation>
</comment>
<comment type="similarity">
    <text evidence="1">Belongs to the RbsD / FucU family. RbsD subfamily.</text>
</comment>
<gene>
    <name evidence="1" type="primary">rbsD</name>
    <name type="ordered locus">Cgl1255</name>
    <name type="ordered locus">cg1414</name>
</gene>
<sequence length="123" mass="13321">MKKSGLLNPDLCYAIARLGHTDTWAVADCGLPIPEHVEIIDLALVFGIPTFEQVLNALKPEVVVEGAVIAEGAPERIREMVDTDVEVVTHEELKAQLAECAFVIRTGETTAYANVIFKSGVAF</sequence>
<reference key="1">
    <citation type="journal article" date="2003" name="Appl. Microbiol. Biotechnol.">
        <title>The Corynebacterium glutamicum genome: features and impacts on biotechnological processes.</title>
        <authorList>
            <person name="Ikeda M."/>
            <person name="Nakagawa S."/>
        </authorList>
    </citation>
    <scope>NUCLEOTIDE SEQUENCE [LARGE SCALE GENOMIC DNA]</scope>
    <source>
        <strain>ATCC 13032 / DSM 20300 / JCM 1318 / BCRC 11384 / CCUG 27702 / LMG 3730 / NBRC 12168 / NCIMB 10025 / NRRL B-2784 / 534</strain>
    </source>
</reference>
<reference key="2">
    <citation type="journal article" date="2003" name="J. Biotechnol.">
        <title>The complete Corynebacterium glutamicum ATCC 13032 genome sequence and its impact on the production of L-aspartate-derived amino acids and vitamins.</title>
        <authorList>
            <person name="Kalinowski J."/>
            <person name="Bathe B."/>
            <person name="Bartels D."/>
            <person name="Bischoff N."/>
            <person name="Bott M."/>
            <person name="Burkovski A."/>
            <person name="Dusch N."/>
            <person name="Eggeling L."/>
            <person name="Eikmanns B.J."/>
            <person name="Gaigalat L."/>
            <person name="Goesmann A."/>
            <person name="Hartmann M."/>
            <person name="Huthmacher K."/>
            <person name="Kraemer R."/>
            <person name="Linke B."/>
            <person name="McHardy A.C."/>
            <person name="Meyer F."/>
            <person name="Moeckel B."/>
            <person name="Pfefferle W."/>
            <person name="Puehler A."/>
            <person name="Rey D.A."/>
            <person name="Rueckert C."/>
            <person name="Rupp O."/>
            <person name="Sahm H."/>
            <person name="Wendisch V.F."/>
            <person name="Wiegraebe I."/>
            <person name="Tauch A."/>
        </authorList>
    </citation>
    <scope>NUCLEOTIDE SEQUENCE [LARGE SCALE GENOMIC DNA]</scope>
    <source>
        <strain>ATCC 13032 / DSM 20300 / JCM 1318 / BCRC 11384 / CCUG 27702 / LMG 3730 / NBRC 12168 / NCIMB 10025 / NRRL B-2784 / 534</strain>
    </source>
</reference>
<keyword id="KW-0119">Carbohydrate metabolism</keyword>
<keyword id="KW-0963">Cytoplasm</keyword>
<keyword id="KW-0413">Isomerase</keyword>
<keyword id="KW-1185">Reference proteome</keyword>
<evidence type="ECO:0000255" key="1">
    <source>
        <dbReference type="HAMAP-Rule" id="MF_01661"/>
    </source>
</evidence>
<protein>
    <recommendedName>
        <fullName evidence="1">D-ribose pyranase</fullName>
        <ecNumber evidence="1">5.4.99.62</ecNumber>
    </recommendedName>
</protein>
<dbReference type="EC" id="5.4.99.62" evidence="1"/>
<dbReference type="EMBL" id="BA000036">
    <property type="protein sequence ID" value="BAB98648.1"/>
    <property type="molecule type" value="Genomic_DNA"/>
</dbReference>
<dbReference type="EMBL" id="BX927151">
    <property type="protein sequence ID" value="CAF19958.1"/>
    <property type="molecule type" value="Genomic_DNA"/>
</dbReference>
<dbReference type="RefSeq" id="NP_600478.1">
    <property type="nucleotide sequence ID" value="NC_003450.3"/>
</dbReference>
<dbReference type="RefSeq" id="WP_011014236.1">
    <property type="nucleotide sequence ID" value="NC_006958.1"/>
</dbReference>
<dbReference type="SMR" id="Q8NR09"/>
<dbReference type="STRING" id="196627.cg1414"/>
<dbReference type="GeneID" id="1019237"/>
<dbReference type="KEGG" id="cgb:cg1414"/>
<dbReference type="KEGG" id="cgl:Cgl1255"/>
<dbReference type="PATRIC" id="fig|196627.13.peg.1232"/>
<dbReference type="eggNOG" id="COG1869">
    <property type="taxonomic scope" value="Bacteria"/>
</dbReference>
<dbReference type="HOGENOM" id="CLU_135498_0_0_11"/>
<dbReference type="OrthoDB" id="9805009at2"/>
<dbReference type="BioCyc" id="CORYNE:G18NG-10828-MONOMER"/>
<dbReference type="UniPathway" id="UPA00916">
    <property type="reaction ID" value="UER00888"/>
</dbReference>
<dbReference type="Proteomes" id="UP000000582">
    <property type="component" value="Chromosome"/>
</dbReference>
<dbReference type="Proteomes" id="UP000001009">
    <property type="component" value="Chromosome"/>
</dbReference>
<dbReference type="GO" id="GO:0005829">
    <property type="term" value="C:cytosol"/>
    <property type="evidence" value="ECO:0007669"/>
    <property type="project" value="TreeGrafter"/>
</dbReference>
<dbReference type="GO" id="GO:0062193">
    <property type="term" value="F:D-ribose pyranase activity"/>
    <property type="evidence" value="ECO:0007669"/>
    <property type="project" value="UniProtKB-EC"/>
</dbReference>
<dbReference type="GO" id="GO:0016872">
    <property type="term" value="F:intramolecular lyase activity"/>
    <property type="evidence" value="ECO:0007669"/>
    <property type="project" value="UniProtKB-UniRule"/>
</dbReference>
<dbReference type="GO" id="GO:0048029">
    <property type="term" value="F:monosaccharide binding"/>
    <property type="evidence" value="ECO:0007669"/>
    <property type="project" value="InterPro"/>
</dbReference>
<dbReference type="GO" id="GO:0019303">
    <property type="term" value="P:D-ribose catabolic process"/>
    <property type="evidence" value="ECO:0007669"/>
    <property type="project" value="UniProtKB-UniRule"/>
</dbReference>
<dbReference type="Gene3D" id="3.40.1650.10">
    <property type="entry name" value="RbsD-like domain"/>
    <property type="match status" value="1"/>
</dbReference>
<dbReference type="HAMAP" id="MF_01661">
    <property type="entry name" value="D_rib_pyranase"/>
    <property type="match status" value="1"/>
</dbReference>
<dbReference type="InterPro" id="IPR023064">
    <property type="entry name" value="D-ribose_pyranase"/>
</dbReference>
<dbReference type="InterPro" id="IPR023750">
    <property type="entry name" value="RbsD-like_sf"/>
</dbReference>
<dbReference type="InterPro" id="IPR007721">
    <property type="entry name" value="RbsD_FucU"/>
</dbReference>
<dbReference type="NCBIfam" id="NF008761">
    <property type="entry name" value="PRK11797.1"/>
    <property type="match status" value="1"/>
</dbReference>
<dbReference type="PANTHER" id="PTHR37831">
    <property type="entry name" value="D-RIBOSE PYRANASE"/>
    <property type="match status" value="1"/>
</dbReference>
<dbReference type="PANTHER" id="PTHR37831:SF1">
    <property type="entry name" value="D-RIBOSE PYRANASE"/>
    <property type="match status" value="1"/>
</dbReference>
<dbReference type="Pfam" id="PF05025">
    <property type="entry name" value="RbsD_FucU"/>
    <property type="match status" value="1"/>
</dbReference>
<dbReference type="SUPFAM" id="SSF102546">
    <property type="entry name" value="RbsD-like"/>
    <property type="match status" value="1"/>
</dbReference>
<feature type="chain" id="PRO_0000346189" description="D-ribose pyranase">
    <location>
        <begin position="1"/>
        <end position="123"/>
    </location>
</feature>
<feature type="active site" description="Proton donor" evidence="1">
    <location>
        <position position="20"/>
    </location>
</feature>
<feature type="binding site" evidence="1">
    <location>
        <position position="28"/>
    </location>
    <ligand>
        <name>substrate</name>
    </ligand>
</feature>
<feature type="binding site" evidence="1">
    <location>
        <position position="90"/>
    </location>
    <ligand>
        <name>substrate</name>
    </ligand>
</feature>
<feature type="binding site" evidence="1">
    <location>
        <begin position="112"/>
        <end position="114"/>
    </location>
    <ligand>
        <name>substrate</name>
    </ligand>
</feature>
<proteinExistence type="inferred from homology"/>
<name>RBSD_CORGL</name>
<accession>Q8NR09</accession>
<accession>Q6M5T3</accession>